<feature type="chain" id="PRO_0000212254" description="Cell wall teichoic acid glycosylation protein GtcA">
    <location>
        <begin position="1"/>
        <end position="145"/>
    </location>
</feature>
<feature type="transmembrane region" description="Helical" evidence="2">
    <location>
        <begin position="21"/>
        <end position="41"/>
    </location>
</feature>
<feature type="transmembrane region" description="Helical" evidence="2">
    <location>
        <begin position="52"/>
        <end position="69"/>
    </location>
</feature>
<feature type="transmembrane region" description="Helical" evidence="2">
    <location>
        <begin position="96"/>
        <end position="116"/>
    </location>
</feature>
<feature type="transmembrane region" description="Helical" evidence="2">
    <location>
        <begin position="121"/>
        <end position="141"/>
    </location>
</feature>
<gene>
    <name type="primary">gtcA</name>
    <name type="ordered locus">lmo2549</name>
</gene>
<dbReference type="EMBL" id="AF288455">
    <property type="protein sequence ID" value="AAK82686.1"/>
    <property type="molecule type" value="Genomic_DNA"/>
</dbReference>
<dbReference type="EMBL" id="AL591983">
    <property type="protein sequence ID" value="CAD00627.1"/>
    <property type="molecule type" value="Genomic_DNA"/>
</dbReference>
<dbReference type="EMBL" id="AH010952">
    <property type="protein sequence ID" value="AAK82683.1"/>
    <property type="molecule type" value="Genomic_DNA"/>
</dbReference>
<dbReference type="PIR" id="AE1393">
    <property type="entry name" value="AE1393"/>
</dbReference>
<dbReference type="RefSeq" id="NP_466072.1">
    <property type="nucleotide sequence ID" value="NC_003210.1"/>
</dbReference>
<dbReference type="RefSeq" id="WP_003724105.1">
    <property type="nucleotide sequence ID" value="NZ_CP149495.1"/>
</dbReference>
<dbReference type="SMR" id="P58412"/>
<dbReference type="STRING" id="169963.gene:17595260"/>
<dbReference type="PaxDb" id="169963-lmo2549"/>
<dbReference type="EnsemblBacteria" id="CAD00627">
    <property type="protein sequence ID" value="CAD00627"/>
    <property type="gene ID" value="CAD00627"/>
</dbReference>
<dbReference type="GeneID" id="984958"/>
<dbReference type="KEGG" id="lmo:lmo2549"/>
<dbReference type="eggNOG" id="COG2246">
    <property type="taxonomic scope" value="Bacteria"/>
</dbReference>
<dbReference type="HOGENOM" id="CLU_083873_1_1_9"/>
<dbReference type="OrthoDB" id="361483at2"/>
<dbReference type="PhylomeDB" id="P58412"/>
<dbReference type="Proteomes" id="UP000000817">
    <property type="component" value="Chromosome"/>
</dbReference>
<dbReference type="GO" id="GO:0005886">
    <property type="term" value="C:plasma membrane"/>
    <property type="evidence" value="ECO:0000318"/>
    <property type="project" value="GO_Central"/>
</dbReference>
<dbReference type="GO" id="GO:0000271">
    <property type="term" value="P:polysaccharide biosynthetic process"/>
    <property type="evidence" value="ECO:0007669"/>
    <property type="project" value="InterPro"/>
</dbReference>
<dbReference type="InterPro" id="IPR051401">
    <property type="entry name" value="GtrA_CellWall_Glycosyl"/>
</dbReference>
<dbReference type="InterPro" id="IPR007267">
    <property type="entry name" value="GtrA_DPMS_TM"/>
</dbReference>
<dbReference type="PANTHER" id="PTHR38459:SF5">
    <property type="entry name" value="CELL WALL TEICHOIC ACID GLYCOSYLATION PROTEIN GTCA"/>
    <property type="match status" value="1"/>
</dbReference>
<dbReference type="PANTHER" id="PTHR38459">
    <property type="entry name" value="PROPHAGE BACTOPRENOL-LINKED GLUCOSE TRANSLOCASE HOMOLOG"/>
    <property type="match status" value="1"/>
</dbReference>
<dbReference type="Pfam" id="PF04138">
    <property type="entry name" value="GtrA_DPMS_TM"/>
    <property type="match status" value="1"/>
</dbReference>
<comment type="function">
    <text evidence="1">Involved in the decoration of cell wall teichoic acid with galactose and glucose.</text>
</comment>
<comment type="subcellular location">
    <subcellularLocation>
        <location evidence="3">Cell membrane</location>
        <topology evidence="3">Multi-pass membrane protein</topology>
    </subcellularLocation>
</comment>
<comment type="similarity">
    <text evidence="3">Belongs to the GtrA family.</text>
</comment>
<proteinExistence type="inferred from homology"/>
<evidence type="ECO:0000250" key="1"/>
<evidence type="ECO:0000255" key="2"/>
<evidence type="ECO:0000305" key="3"/>
<protein>
    <recommendedName>
        <fullName>Cell wall teichoic acid glycosylation protein GtcA</fullName>
    </recommendedName>
</protein>
<name>GTCA_LISMO</name>
<organism>
    <name type="scientific">Listeria monocytogenes serovar 1/2a (strain ATCC BAA-679 / EGD-e)</name>
    <dbReference type="NCBI Taxonomy" id="169963"/>
    <lineage>
        <taxon>Bacteria</taxon>
        <taxon>Bacillati</taxon>
        <taxon>Bacillota</taxon>
        <taxon>Bacilli</taxon>
        <taxon>Bacillales</taxon>
        <taxon>Listeriaceae</taxon>
        <taxon>Listeria</taxon>
    </lineage>
</organism>
<sequence length="145" mass="17521">MNKIRKWLDKIPWYTDEIHSILMYLIMGGFTTLINIVTFWLCTYVLNWDYRIANTIAWVASVLFAYFSNKKYVFESYTPTWKERAREVTSFFGFRFLTYLVDILVMILLIEVLSINELWAKIWTNVIVLVLNYVFSKWIIFKVKK</sequence>
<keyword id="KW-1003">Cell membrane</keyword>
<keyword id="KW-0472">Membrane</keyword>
<keyword id="KW-1185">Reference proteome</keyword>
<keyword id="KW-0812">Transmembrane</keyword>
<keyword id="KW-1133">Transmembrane helix</keyword>
<keyword id="KW-0813">Transport</keyword>
<reference key="1">
    <citation type="submission" date="2000-07" db="EMBL/GenBank/DDBJ databases">
        <title>Listeria monocytogenes serotype 1/2a rho-mtrA-gtcA locus.</title>
        <authorList>
            <person name="Lan Z."/>
            <person name="Kathariou S."/>
        </authorList>
    </citation>
    <scope>NUCLEOTIDE SEQUENCE [GENOMIC DNA]</scope>
    <source>
        <strain>G2228 / Serovar 1/2a</strain>
    </source>
</reference>
<reference key="2">
    <citation type="journal article" date="2001" name="Science">
        <title>Comparative genomics of Listeria species.</title>
        <authorList>
            <person name="Glaser P."/>
            <person name="Frangeul L."/>
            <person name="Buchrieser C."/>
            <person name="Rusniok C."/>
            <person name="Amend A."/>
            <person name="Baquero F."/>
            <person name="Berche P."/>
            <person name="Bloecker H."/>
            <person name="Brandt P."/>
            <person name="Chakraborty T."/>
            <person name="Charbit A."/>
            <person name="Chetouani F."/>
            <person name="Couve E."/>
            <person name="de Daruvar A."/>
            <person name="Dehoux P."/>
            <person name="Domann E."/>
            <person name="Dominguez-Bernal G."/>
            <person name="Duchaud E."/>
            <person name="Durant L."/>
            <person name="Dussurget O."/>
            <person name="Entian K.-D."/>
            <person name="Fsihi H."/>
            <person name="Garcia-del Portillo F."/>
            <person name="Garrido P."/>
            <person name="Gautier L."/>
            <person name="Goebel W."/>
            <person name="Gomez-Lopez N."/>
            <person name="Hain T."/>
            <person name="Hauf J."/>
            <person name="Jackson D."/>
            <person name="Jones L.-M."/>
            <person name="Kaerst U."/>
            <person name="Kreft J."/>
            <person name="Kuhn M."/>
            <person name="Kunst F."/>
            <person name="Kurapkat G."/>
            <person name="Madueno E."/>
            <person name="Maitournam A."/>
            <person name="Mata Vicente J."/>
            <person name="Ng E."/>
            <person name="Nedjari H."/>
            <person name="Nordsiek G."/>
            <person name="Novella S."/>
            <person name="de Pablos B."/>
            <person name="Perez-Diaz J.-C."/>
            <person name="Purcell R."/>
            <person name="Remmel B."/>
            <person name="Rose M."/>
            <person name="Schlueter T."/>
            <person name="Simoes N."/>
            <person name="Tierrez A."/>
            <person name="Vazquez-Boland J.-A."/>
            <person name="Voss H."/>
            <person name="Wehland J."/>
            <person name="Cossart P."/>
        </authorList>
    </citation>
    <scope>NUCLEOTIDE SEQUENCE [LARGE SCALE GENOMIC DNA]</scope>
    <source>
        <strain>ATCC BAA-679 / EGD-e</strain>
    </source>
</reference>
<reference key="3">
    <citation type="submission" date="2000-07" db="EMBL/GenBank/DDBJ databases">
        <title>Listeria monocytogenes serotype 1/2b gtcA locus.</title>
        <authorList>
            <person name="Lan Z."/>
            <person name="Kathariou S."/>
        </authorList>
    </citation>
    <scope>NUCLEOTIDE SEQUENCE [GENOMIC DNA] OF 1-142</scope>
    <source>
        <strain>F4242 / Serovar 1/2b</strain>
    </source>
</reference>
<accession>P58412</accession>